<organism>
    <name type="scientific">Arabidopsis thaliana</name>
    <name type="common">Mouse-ear cress</name>
    <dbReference type="NCBI Taxonomy" id="3702"/>
    <lineage>
        <taxon>Eukaryota</taxon>
        <taxon>Viridiplantae</taxon>
        <taxon>Streptophyta</taxon>
        <taxon>Embryophyta</taxon>
        <taxon>Tracheophyta</taxon>
        <taxon>Spermatophyta</taxon>
        <taxon>Magnoliopsida</taxon>
        <taxon>eudicotyledons</taxon>
        <taxon>Gunneridae</taxon>
        <taxon>Pentapetalae</taxon>
        <taxon>rosids</taxon>
        <taxon>malvids</taxon>
        <taxon>Brassicales</taxon>
        <taxon>Brassicaceae</taxon>
        <taxon>Camelineae</taxon>
        <taxon>Arabidopsis</taxon>
    </lineage>
</organism>
<gene>
    <name type="ordered locus">At5g14160</name>
    <name type="ORF">MUA22.16</name>
</gene>
<name>FB256_ARATH</name>
<keyword id="KW-1185">Reference proteome</keyword>
<accession>Q9FMT5</accession>
<protein>
    <recommendedName>
        <fullName>Putative F-box protein At5g14160</fullName>
    </recommendedName>
</protein>
<reference key="1">
    <citation type="journal article" date="1997" name="DNA Res.">
        <title>Structural analysis of Arabidopsis thaliana chromosome 5. III. Sequence features of the regions of 1,191,918 bp covered by seventeen physically assigned P1 clones.</title>
        <authorList>
            <person name="Nakamura Y."/>
            <person name="Sato S."/>
            <person name="Kaneko T."/>
            <person name="Kotani H."/>
            <person name="Asamizu E."/>
            <person name="Miyajima N."/>
            <person name="Tabata S."/>
        </authorList>
    </citation>
    <scope>NUCLEOTIDE SEQUENCE [LARGE SCALE GENOMIC DNA]</scope>
    <source>
        <strain>cv. Columbia</strain>
    </source>
</reference>
<reference key="2">
    <citation type="journal article" date="2017" name="Plant J.">
        <title>Araport11: a complete reannotation of the Arabidopsis thaliana reference genome.</title>
        <authorList>
            <person name="Cheng C.Y."/>
            <person name="Krishnakumar V."/>
            <person name="Chan A.P."/>
            <person name="Thibaud-Nissen F."/>
            <person name="Schobel S."/>
            <person name="Town C.D."/>
        </authorList>
    </citation>
    <scope>GENOME REANNOTATION</scope>
    <source>
        <strain>cv. Columbia</strain>
    </source>
</reference>
<sequence>MALIHKRQALNSRGVDWSELPEDVIRLVLRRLRLSDFHRARAVCSTWCRVWGDCVSKPNQVPWLILFPDPAQIRRSCMLYNPQEEENVYTIQDLGVDPCLASCGTWLLALFSVLYRKGHFASKAEMMGYPSTDKAVVWIDEKTKDYVVACSWGGDKHAAFCKKGDCEWRQIPPLLGCSDIALKDHKLYIYYEDGSIGISDLKFVTKTAHVQLYPFRFRLGSFSPYDTIWTDYLDWKTNIVITISGDFLMVGCVLKRRDLSWLFRGDQAVILDLGITVQASSDIQGITRNSTYFSGLPSSQKDVFVFNLSSQKVQRLSSSSISSRPFSNARWLFPTSYFTMILFPNIFVFVQL</sequence>
<proteinExistence type="predicted"/>
<dbReference type="EMBL" id="AB007650">
    <property type="protein sequence ID" value="BAB08295.1"/>
    <property type="molecule type" value="Genomic_DNA"/>
</dbReference>
<dbReference type="EMBL" id="CP002688">
    <property type="protein sequence ID" value="AED91994.1"/>
    <property type="molecule type" value="Genomic_DNA"/>
</dbReference>
<dbReference type="RefSeq" id="NP_196920.1">
    <property type="nucleotide sequence ID" value="NM_121420.1"/>
</dbReference>
<dbReference type="FunCoup" id="Q9FMT5">
    <property type="interactions" value="167"/>
</dbReference>
<dbReference type="PaxDb" id="3702-AT5G14160.1"/>
<dbReference type="EnsemblPlants" id="AT5G14160.1">
    <property type="protein sequence ID" value="AT5G14160.1"/>
    <property type="gene ID" value="AT5G14160"/>
</dbReference>
<dbReference type="GeneID" id="831266"/>
<dbReference type="Gramene" id="AT5G14160.1">
    <property type="protein sequence ID" value="AT5G14160.1"/>
    <property type="gene ID" value="AT5G14160"/>
</dbReference>
<dbReference type="KEGG" id="ath:AT5G14160"/>
<dbReference type="Araport" id="AT5G14160"/>
<dbReference type="TAIR" id="AT5G14160">
    <property type="gene designation" value="ATFDB34"/>
</dbReference>
<dbReference type="HOGENOM" id="CLU_019286_7_1_1"/>
<dbReference type="InParanoid" id="Q9FMT5"/>
<dbReference type="OMA" id="WKTNIVI"/>
<dbReference type="PhylomeDB" id="Q9FMT5"/>
<dbReference type="PRO" id="PR:Q9FMT5"/>
<dbReference type="Proteomes" id="UP000006548">
    <property type="component" value="Chromosome 5"/>
</dbReference>
<dbReference type="ExpressionAtlas" id="Q9FMT5">
    <property type="expression patterns" value="baseline and differential"/>
</dbReference>
<dbReference type="Gene3D" id="1.20.1280.50">
    <property type="match status" value="1"/>
</dbReference>
<dbReference type="InterPro" id="IPR036047">
    <property type="entry name" value="F-box-like_dom_sf"/>
</dbReference>
<dbReference type="InterPro" id="IPR050942">
    <property type="entry name" value="F-box_BR-signaling"/>
</dbReference>
<dbReference type="InterPro" id="IPR001810">
    <property type="entry name" value="F-box_dom"/>
</dbReference>
<dbReference type="InterPro" id="IPR005174">
    <property type="entry name" value="KIB1-4_b-propeller"/>
</dbReference>
<dbReference type="PANTHER" id="PTHR44259:SF26">
    <property type="entry name" value="F-BOX FAMILY PROTEIN-LIKE PROTEIN"/>
    <property type="match status" value="1"/>
</dbReference>
<dbReference type="PANTHER" id="PTHR44259">
    <property type="entry name" value="OS07G0183000 PROTEIN-RELATED"/>
    <property type="match status" value="1"/>
</dbReference>
<dbReference type="Pfam" id="PF03478">
    <property type="entry name" value="Beta-prop_KIB1-4"/>
    <property type="match status" value="1"/>
</dbReference>
<dbReference type="Pfam" id="PF00646">
    <property type="entry name" value="F-box"/>
    <property type="match status" value="1"/>
</dbReference>
<dbReference type="SMART" id="SM00256">
    <property type="entry name" value="FBOX"/>
    <property type="match status" value="1"/>
</dbReference>
<dbReference type="SUPFAM" id="SSF81383">
    <property type="entry name" value="F-box domain"/>
    <property type="match status" value="1"/>
</dbReference>
<feature type="chain" id="PRO_0000283523" description="Putative F-box protein At5g14160">
    <location>
        <begin position="1"/>
        <end position="352"/>
    </location>
</feature>
<feature type="domain" description="F-box">
    <location>
        <begin position="14"/>
        <end position="60"/>
    </location>
</feature>